<keyword id="KW-0028">Amino-acid biosynthesis</keyword>
<keyword id="KW-0032">Aminotransferase</keyword>
<keyword id="KW-0963">Cytoplasm</keyword>
<keyword id="KW-0641">Proline biosynthesis</keyword>
<keyword id="KW-0663">Pyridoxal phosphate</keyword>
<keyword id="KW-0808">Transferase</keyword>
<organism>
    <name type="scientific">Bacillus cereus (strain Q1)</name>
    <dbReference type="NCBI Taxonomy" id="361100"/>
    <lineage>
        <taxon>Bacteria</taxon>
        <taxon>Bacillati</taxon>
        <taxon>Bacillota</taxon>
        <taxon>Bacilli</taxon>
        <taxon>Bacillales</taxon>
        <taxon>Bacillaceae</taxon>
        <taxon>Bacillus</taxon>
        <taxon>Bacillus cereus group</taxon>
    </lineage>
</organism>
<sequence length="396" mass="43229">MIQTKDIIELTDTYGANNYHPLPIVISKAEGVWVEDPEGNRYMDLLSAYSAVNQGHRHPKIINALIDQANRVTLTSRAFHSDQLGPWYEKVAKLTNKEMVLPMNTGAEAVETAIKTARRWAYDVKKVEANRAEIIVCEDNFHGRTMGAVSMSSNEEYKRGFGPMLPGIVVIPYGDLEALKAAITPNTAAFILEPIQGEAGINIPPAGFLKEALEVCKKENVLFVADEIQTGLGRTGKVFACDWDGVTPDMYILGKALGGGVFPISCVAANRDILGVFEPGSHGSTFGGNPLACAVSIAALEVLEEEKLTERSLQLGEKLVGQLKEIDNPMITEVRGKGLFIGIELNEPARPYCEQLKAAGLLCKETHENVIRIAPPLVISEEDLEWAFQKIKAVLS</sequence>
<feature type="chain" id="PRO_1000187438" description="Ornithine aminotransferase">
    <location>
        <begin position="1"/>
        <end position="396"/>
    </location>
</feature>
<feature type="modified residue" description="N6-(pyridoxal phosphate)lysine" evidence="1">
    <location>
        <position position="255"/>
    </location>
</feature>
<evidence type="ECO:0000255" key="1">
    <source>
        <dbReference type="HAMAP-Rule" id="MF_01689"/>
    </source>
</evidence>
<comment type="function">
    <text evidence="1">Catalyzes the interconversion of ornithine to glutamate semialdehyde.</text>
</comment>
<comment type="catalytic activity">
    <reaction evidence="1">
        <text>a 2-oxocarboxylate + L-ornithine = L-glutamate 5-semialdehyde + an L-alpha-amino acid</text>
        <dbReference type="Rhea" id="RHEA:13877"/>
        <dbReference type="ChEBI" id="CHEBI:35179"/>
        <dbReference type="ChEBI" id="CHEBI:46911"/>
        <dbReference type="ChEBI" id="CHEBI:58066"/>
        <dbReference type="ChEBI" id="CHEBI:59869"/>
        <dbReference type="EC" id="2.6.1.13"/>
    </reaction>
</comment>
<comment type="cofactor">
    <cofactor evidence="1">
        <name>pyridoxal 5'-phosphate</name>
        <dbReference type="ChEBI" id="CHEBI:597326"/>
    </cofactor>
</comment>
<comment type="pathway">
    <text evidence="1">Amino-acid biosynthesis; L-proline biosynthesis; L-glutamate 5-semialdehyde from L-ornithine: step 1/1.</text>
</comment>
<comment type="subcellular location">
    <subcellularLocation>
        <location evidence="1">Cytoplasm</location>
    </subcellularLocation>
</comment>
<comment type="similarity">
    <text evidence="1">Belongs to the class-III pyridoxal-phosphate-dependent aminotransferase family. OAT subfamily.</text>
</comment>
<dbReference type="EC" id="2.6.1.13" evidence="1"/>
<dbReference type="EMBL" id="CP000227">
    <property type="protein sequence ID" value="ACM11641.1"/>
    <property type="molecule type" value="Genomic_DNA"/>
</dbReference>
<dbReference type="SMR" id="B9ITF9"/>
<dbReference type="KEGG" id="bcq:BCQ_1211"/>
<dbReference type="HOGENOM" id="CLU_016922_10_3_9"/>
<dbReference type="UniPathway" id="UPA00098">
    <property type="reaction ID" value="UER00358"/>
</dbReference>
<dbReference type="Proteomes" id="UP000000441">
    <property type="component" value="Chromosome"/>
</dbReference>
<dbReference type="GO" id="GO:0005737">
    <property type="term" value="C:cytoplasm"/>
    <property type="evidence" value="ECO:0007669"/>
    <property type="project" value="UniProtKB-SubCell"/>
</dbReference>
<dbReference type="GO" id="GO:0042802">
    <property type="term" value="F:identical protein binding"/>
    <property type="evidence" value="ECO:0007669"/>
    <property type="project" value="TreeGrafter"/>
</dbReference>
<dbReference type="GO" id="GO:0004587">
    <property type="term" value="F:ornithine aminotransferase activity"/>
    <property type="evidence" value="ECO:0007669"/>
    <property type="project" value="UniProtKB-UniRule"/>
</dbReference>
<dbReference type="GO" id="GO:0030170">
    <property type="term" value="F:pyridoxal phosphate binding"/>
    <property type="evidence" value="ECO:0007669"/>
    <property type="project" value="UniProtKB-UniRule"/>
</dbReference>
<dbReference type="GO" id="GO:0055129">
    <property type="term" value="P:L-proline biosynthetic process"/>
    <property type="evidence" value="ECO:0007669"/>
    <property type="project" value="UniProtKB-UniRule"/>
</dbReference>
<dbReference type="CDD" id="cd00610">
    <property type="entry name" value="OAT_like"/>
    <property type="match status" value="1"/>
</dbReference>
<dbReference type="FunFam" id="3.40.640.10:FF:000011">
    <property type="entry name" value="Ornithine aminotransferase"/>
    <property type="match status" value="1"/>
</dbReference>
<dbReference type="Gene3D" id="3.90.1150.10">
    <property type="entry name" value="Aspartate Aminotransferase, domain 1"/>
    <property type="match status" value="1"/>
</dbReference>
<dbReference type="Gene3D" id="3.40.640.10">
    <property type="entry name" value="Type I PLP-dependent aspartate aminotransferase-like (Major domain)"/>
    <property type="match status" value="1"/>
</dbReference>
<dbReference type="HAMAP" id="MF_01689">
    <property type="entry name" value="Ornith_aminotrans_3"/>
    <property type="match status" value="1"/>
</dbReference>
<dbReference type="InterPro" id="IPR005814">
    <property type="entry name" value="Aminotrans_3"/>
</dbReference>
<dbReference type="InterPro" id="IPR049704">
    <property type="entry name" value="Aminotrans_3_PPA_site"/>
</dbReference>
<dbReference type="InterPro" id="IPR050103">
    <property type="entry name" value="Class-III_PLP-dep_AT"/>
</dbReference>
<dbReference type="InterPro" id="IPR010164">
    <property type="entry name" value="Orn_aminotrans"/>
</dbReference>
<dbReference type="InterPro" id="IPR034757">
    <property type="entry name" value="Ornith_aminotrans_bact"/>
</dbReference>
<dbReference type="InterPro" id="IPR015424">
    <property type="entry name" value="PyrdxlP-dep_Trfase"/>
</dbReference>
<dbReference type="InterPro" id="IPR015421">
    <property type="entry name" value="PyrdxlP-dep_Trfase_major"/>
</dbReference>
<dbReference type="InterPro" id="IPR015422">
    <property type="entry name" value="PyrdxlP-dep_Trfase_small"/>
</dbReference>
<dbReference type="NCBIfam" id="TIGR01885">
    <property type="entry name" value="Orn_aminotrans"/>
    <property type="match status" value="1"/>
</dbReference>
<dbReference type="NCBIfam" id="NF003145">
    <property type="entry name" value="PRK04073.1"/>
    <property type="match status" value="1"/>
</dbReference>
<dbReference type="PANTHER" id="PTHR11986">
    <property type="entry name" value="AMINOTRANSFERASE CLASS III"/>
    <property type="match status" value="1"/>
</dbReference>
<dbReference type="PANTHER" id="PTHR11986:SF18">
    <property type="entry name" value="ORNITHINE AMINOTRANSFERASE, MITOCHONDRIAL"/>
    <property type="match status" value="1"/>
</dbReference>
<dbReference type="Pfam" id="PF00202">
    <property type="entry name" value="Aminotran_3"/>
    <property type="match status" value="1"/>
</dbReference>
<dbReference type="PIRSF" id="PIRSF000521">
    <property type="entry name" value="Transaminase_4ab_Lys_Orn"/>
    <property type="match status" value="1"/>
</dbReference>
<dbReference type="SUPFAM" id="SSF53383">
    <property type="entry name" value="PLP-dependent transferases"/>
    <property type="match status" value="1"/>
</dbReference>
<dbReference type="PROSITE" id="PS00600">
    <property type="entry name" value="AA_TRANSFER_CLASS_3"/>
    <property type="match status" value="1"/>
</dbReference>
<protein>
    <recommendedName>
        <fullName evidence="1">Ornithine aminotransferase</fullName>
        <shortName evidence="1">OAT</shortName>
        <ecNumber evidence="1">2.6.1.13</ecNumber>
    </recommendedName>
    <alternativeName>
        <fullName evidence="1">Ornithine--oxo-acid aminotransferase</fullName>
    </alternativeName>
</protein>
<reference key="1">
    <citation type="journal article" date="2009" name="J. Bacteriol.">
        <title>Complete genome sequence of the extremophilic Bacillus cereus strain Q1 with industrial applications.</title>
        <authorList>
            <person name="Xiong Z."/>
            <person name="Jiang Y."/>
            <person name="Qi D."/>
            <person name="Lu H."/>
            <person name="Yang F."/>
            <person name="Yang J."/>
            <person name="Chen L."/>
            <person name="Sun L."/>
            <person name="Xu X."/>
            <person name="Xue Y."/>
            <person name="Zhu Y."/>
            <person name="Jin Q."/>
        </authorList>
    </citation>
    <scope>NUCLEOTIDE SEQUENCE [LARGE SCALE GENOMIC DNA]</scope>
    <source>
        <strain>Q1</strain>
    </source>
</reference>
<accession>B9ITF9</accession>
<name>OAT_BACCQ</name>
<gene>
    <name evidence="1" type="primary">rocD</name>
    <name type="ordered locus">BCQ_1211</name>
</gene>
<proteinExistence type="inferred from homology"/>